<dbReference type="EC" id="3.2.1.23"/>
<dbReference type="EMBL" id="DP000009">
    <property type="protein sequence ID" value="ABF95027.1"/>
    <property type="status" value="ALT_SEQ"/>
    <property type="molecule type" value="Genomic_DNA"/>
</dbReference>
<dbReference type="EMBL" id="AP008209">
    <property type="protein sequence ID" value="BAF11505.1"/>
    <property type="status" value="ALT_SEQ"/>
    <property type="molecule type" value="Genomic_DNA"/>
</dbReference>
<dbReference type="EMBL" id="AP014959">
    <property type="status" value="NOT_ANNOTATED_CDS"/>
    <property type="molecule type" value="Genomic_DNA"/>
</dbReference>
<dbReference type="RefSeq" id="XP_015632058.1">
    <property type="nucleotide sequence ID" value="XM_015776572.1"/>
</dbReference>
<dbReference type="SMR" id="Q10NX8"/>
<dbReference type="FunCoup" id="Q10NX8">
    <property type="interactions" value="58"/>
</dbReference>
<dbReference type="STRING" id="39947.Q10NX8"/>
<dbReference type="CAZy" id="GH35">
    <property type="family name" value="Glycoside Hydrolase Family 35"/>
</dbReference>
<dbReference type="PaxDb" id="39947-Q10NX8"/>
<dbReference type="KEGG" id="dosa:Os03g0255100"/>
<dbReference type="eggNOG" id="KOG0496">
    <property type="taxonomic scope" value="Eukaryota"/>
</dbReference>
<dbReference type="InParanoid" id="Q10NX8"/>
<dbReference type="OrthoDB" id="1657402at2759"/>
<dbReference type="Proteomes" id="UP000000763">
    <property type="component" value="Chromosome 3"/>
</dbReference>
<dbReference type="Proteomes" id="UP000059680">
    <property type="component" value="Chromosome 3"/>
</dbReference>
<dbReference type="GO" id="GO:0048046">
    <property type="term" value="C:apoplast"/>
    <property type="evidence" value="ECO:0007669"/>
    <property type="project" value="UniProtKB-SubCell"/>
</dbReference>
<dbReference type="GO" id="GO:0009505">
    <property type="term" value="C:plant-type cell wall"/>
    <property type="evidence" value="ECO:0000318"/>
    <property type="project" value="GO_Central"/>
</dbReference>
<dbReference type="GO" id="GO:0005773">
    <property type="term" value="C:vacuole"/>
    <property type="evidence" value="ECO:0000318"/>
    <property type="project" value="GO_Central"/>
</dbReference>
<dbReference type="GO" id="GO:0004565">
    <property type="term" value="F:beta-galactosidase activity"/>
    <property type="evidence" value="ECO:0000318"/>
    <property type="project" value="GO_Central"/>
</dbReference>
<dbReference type="GO" id="GO:0030246">
    <property type="term" value="F:carbohydrate binding"/>
    <property type="evidence" value="ECO:0007669"/>
    <property type="project" value="InterPro"/>
</dbReference>
<dbReference type="GO" id="GO:0019388">
    <property type="term" value="P:galactose catabolic process"/>
    <property type="evidence" value="ECO:0000318"/>
    <property type="project" value="GO_Central"/>
</dbReference>
<dbReference type="GO" id="GO:0009827">
    <property type="term" value="P:plant-type cell wall modification"/>
    <property type="evidence" value="ECO:0000318"/>
    <property type="project" value="GO_Central"/>
</dbReference>
<dbReference type="CDD" id="cd22842">
    <property type="entry name" value="Gal_Rha_Lectin_BGal"/>
    <property type="match status" value="1"/>
</dbReference>
<dbReference type="FunFam" id="2.60.120.260:FF:000061">
    <property type="entry name" value="Beta-galactosidase"/>
    <property type="match status" value="1"/>
</dbReference>
<dbReference type="FunFam" id="2.60.120.260:FF:000076">
    <property type="entry name" value="Beta-galactosidase"/>
    <property type="match status" value="1"/>
</dbReference>
<dbReference type="FunFam" id="2.60.120.260:FF:000142">
    <property type="entry name" value="Beta-galactosidase"/>
    <property type="match status" value="1"/>
</dbReference>
<dbReference type="FunFam" id="2.60.120.740:FF:000002">
    <property type="entry name" value="Beta-galactosidase"/>
    <property type="match status" value="1"/>
</dbReference>
<dbReference type="FunFam" id="3.20.20.80:FF:000006">
    <property type="entry name" value="Beta-galactosidase"/>
    <property type="match status" value="1"/>
</dbReference>
<dbReference type="Gene3D" id="2.60.120.740">
    <property type="match status" value="1"/>
</dbReference>
<dbReference type="Gene3D" id="2.60.120.260">
    <property type="entry name" value="Galactose-binding domain-like"/>
    <property type="match status" value="2"/>
</dbReference>
<dbReference type="Gene3D" id="3.20.20.80">
    <property type="entry name" value="Glycosidases"/>
    <property type="match status" value="1"/>
</dbReference>
<dbReference type="InterPro" id="IPR048913">
    <property type="entry name" value="BetaGal_gal-bd"/>
</dbReference>
<dbReference type="InterPro" id="IPR008979">
    <property type="entry name" value="Galactose-bd-like_sf"/>
</dbReference>
<dbReference type="InterPro" id="IPR041392">
    <property type="entry name" value="GHD"/>
</dbReference>
<dbReference type="InterPro" id="IPR031330">
    <property type="entry name" value="Gly_Hdrlase_35_cat"/>
</dbReference>
<dbReference type="InterPro" id="IPR019801">
    <property type="entry name" value="Glyco_hydro_35_CS"/>
</dbReference>
<dbReference type="InterPro" id="IPR001944">
    <property type="entry name" value="Glycoside_Hdrlase_35"/>
</dbReference>
<dbReference type="InterPro" id="IPR017853">
    <property type="entry name" value="Glycoside_hydrolase_SF"/>
</dbReference>
<dbReference type="InterPro" id="IPR000922">
    <property type="entry name" value="Lectin_gal-bd_dom"/>
</dbReference>
<dbReference type="InterPro" id="IPR043159">
    <property type="entry name" value="Lectin_gal-bd_sf"/>
</dbReference>
<dbReference type="PANTHER" id="PTHR23421">
    <property type="entry name" value="BETA-GALACTOSIDASE RELATED"/>
    <property type="match status" value="1"/>
</dbReference>
<dbReference type="Pfam" id="PF21467">
    <property type="entry name" value="BetaGal_gal-bd"/>
    <property type="match status" value="1"/>
</dbReference>
<dbReference type="Pfam" id="PF17834">
    <property type="entry name" value="GHD"/>
    <property type="match status" value="1"/>
</dbReference>
<dbReference type="Pfam" id="PF01301">
    <property type="entry name" value="Glyco_hydro_35"/>
    <property type="match status" value="1"/>
</dbReference>
<dbReference type="Pfam" id="PF02140">
    <property type="entry name" value="SUEL_Lectin"/>
    <property type="match status" value="1"/>
</dbReference>
<dbReference type="PRINTS" id="PR00742">
    <property type="entry name" value="GLHYDRLASE35"/>
</dbReference>
<dbReference type="SUPFAM" id="SSF51445">
    <property type="entry name" value="(Trans)glycosidases"/>
    <property type="match status" value="1"/>
</dbReference>
<dbReference type="SUPFAM" id="SSF49785">
    <property type="entry name" value="Galactose-binding domain-like"/>
    <property type="match status" value="2"/>
</dbReference>
<dbReference type="PROSITE" id="PS01182">
    <property type="entry name" value="GLYCOSYL_HYDROL_F35"/>
    <property type="match status" value="1"/>
</dbReference>
<dbReference type="PROSITE" id="PS50228">
    <property type="entry name" value="SUEL_LECTIN"/>
    <property type="match status" value="1"/>
</dbReference>
<reference key="1">
    <citation type="journal article" date="2005" name="Genome Res.">
        <title>Sequence, annotation, and analysis of synteny between rice chromosome 3 and diverged grass species.</title>
        <authorList>
            <consortium name="The rice chromosome 3 sequencing consortium"/>
            <person name="Buell C.R."/>
            <person name="Yuan Q."/>
            <person name="Ouyang S."/>
            <person name="Liu J."/>
            <person name="Zhu W."/>
            <person name="Wang A."/>
            <person name="Maiti R."/>
            <person name="Haas B."/>
            <person name="Wortman J."/>
            <person name="Pertea M."/>
            <person name="Jones K.M."/>
            <person name="Kim M."/>
            <person name="Overton L."/>
            <person name="Tsitrin T."/>
            <person name="Fadrosh D."/>
            <person name="Bera J."/>
            <person name="Weaver B."/>
            <person name="Jin S."/>
            <person name="Johri S."/>
            <person name="Reardon M."/>
            <person name="Webb K."/>
            <person name="Hill J."/>
            <person name="Moffat K."/>
            <person name="Tallon L."/>
            <person name="Van Aken S."/>
            <person name="Lewis M."/>
            <person name="Utterback T."/>
            <person name="Feldblyum T."/>
            <person name="Zismann V."/>
            <person name="Iobst S."/>
            <person name="Hsiao J."/>
            <person name="de Vazeille A.R."/>
            <person name="Salzberg S.L."/>
            <person name="White O."/>
            <person name="Fraser C.M."/>
            <person name="Yu Y."/>
            <person name="Kim H."/>
            <person name="Rambo T."/>
            <person name="Currie J."/>
            <person name="Collura K."/>
            <person name="Kernodle-Thompson S."/>
            <person name="Wei F."/>
            <person name="Kudrna K."/>
            <person name="Ammiraju J.S.S."/>
            <person name="Luo M."/>
            <person name="Goicoechea J.L."/>
            <person name="Wing R.A."/>
            <person name="Henry D."/>
            <person name="Oates R."/>
            <person name="Palmer M."/>
            <person name="Pries G."/>
            <person name="Saski C."/>
            <person name="Simmons J."/>
            <person name="Soderlund C."/>
            <person name="Nelson W."/>
            <person name="de la Bastide M."/>
            <person name="Spiegel L."/>
            <person name="Nascimento L."/>
            <person name="Huang E."/>
            <person name="Preston R."/>
            <person name="Zutavern T."/>
            <person name="Palmer L."/>
            <person name="O'Shaughnessy A."/>
            <person name="Dike S."/>
            <person name="McCombie W.R."/>
            <person name="Minx P."/>
            <person name="Cordum H."/>
            <person name="Wilson R."/>
            <person name="Jin W."/>
            <person name="Lee H.R."/>
            <person name="Jiang J."/>
            <person name="Jackson S."/>
        </authorList>
    </citation>
    <scope>NUCLEOTIDE SEQUENCE [LARGE SCALE GENOMIC DNA]</scope>
    <source>
        <strain>cv. Nipponbare</strain>
    </source>
</reference>
<reference key="2">
    <citation type="journal article" date="2005" name="Nature">
        <title>The map-based sequence of the rice genome.</title>
        <authorList>
            <consortium name="International rice genome sequencing project (IRGSP)"/>
        </authorList>
    </citation>
    <scope>NUCLEOTIDE SEQUENCE [LARGE SCALE GENOMIC DNA]</scope>
    <source>
        <strain>cv. Nipponbare</strain>
    </source>
</reference>
<reference key="3">
    <citation type="journal article" date="2008" name="Nucleic Acids Res.">
        <title>The rice annotation project database (RAP-DB): 2008 update.</title>
        <authorList>
            <consortium name="The rice annotation project (RAP)"/>
        </authorList>
    </citation>
    <scope>GENOME REANNOTATION</scope>
    <source>
        <strain>cv. Nipponbare</strain>
    </source>
</reference>
<reference key="4">
    <citation type="journal article" date="2013" name="Rice">
        <title>Improvement of the Oryza sativa Nipponbare reference genome using next generation sequence and optical map data.</title>
        <authorList>
            <person name="Kawahara Y."/>
            <person name="de la Bastide M."/>
            <person name="Hamilton J.P."/>
            <person name="Kanamori H."/>
            <person name="McCombie W.R."/>
            <person name="Ouyang S."/>
            <person name="Schwartz D.C."/>
            <person name="Tanaka T."/>
            <person name="Wu J."/>
            <person name="Zhou S."/>
            <person name="Childs K.L."/>
            <person name="Davidson R.M."/>
            <person name="Lin H."/>
            <person name="Quesada-Ocampo L."/>
            <person name="Vaillancourt B."/>
            <person name="Sakai H."/>
            <person name="Lee S.S."/>
            <person name="Kim J."/>
            <person name="Numa H."/>
            <person name="Itoh T."/>
            <person name="Buell C.R."/>
            <person name="Matsumoto T."/>
        </authorList>
    </citation>
    <scope>GENOME REANNOTATION</scope>
    <source>
        <strain>cv. Nipponbare</strain>
    </source>
</reference>
<reference key="5">
    <citation type="journal article" date="2003" name="Biosci. Biotechnol. Biochem.">
        <title>Purification and characterization of extracellular beta-galactosidase secreted by supension cultured rice (Oryza sativa L.) cells.</title>
        <authorList>
            <person name="Kaneko S."/>
            <person name="Kobayashi H."/>
        </authorList>
    </citation>
    <scope>PROTEIN SEQUENCE OF 31-80 AND 453-498</scope>
    <scope>FUNCTION</scope>
    <scope>BIOPHYSICOCHEMICAL PROPERTIES</scope>
    <source>
        <strain>cv. Nipponbare</strain>
        <tissue>Callus</tissue>
    </source>
</reference>
<evidence type="ECO:0000255" key="1"/>
<evidence type="ECO:0000255" key="2">
    <source>
        <dbReference type="PROSITE-ProRule" id="PRU00260"/>
    </source>
</evidence>
<evidence type="ECO:0000269" key="3">
    <source>
    </source>
</evidence>
<evidence type="ECO:0000305" key="4"/>
<proteinExistence type="evidence at protein level"/>
<accession>Q10NX8</accession>
<keyword id="KW-0052">Apoplast</keyword>
<keyword id="KW-0903">Direct protein sequencing</keyword>
<keyword id="KW-0325">Glycoprotein</keyword>
<keyword id="KW-0326">Glycosidase</keyword>
<keyword id="KW-0378">Hydrolase</keyword>
<keyword id="KW-1185">Reference proteome</keyword>
<keyword id="KW-0964">Secreted</keyword>
<keyword id="KW-0732">Signal</keyword>
<comment type="function">
    <text evidence="3">Releases galactose by hydrolysis of plant cell wall galactose-containing polysaccharides such as galacto-xyloglucan, pectic galactan and galactan (in vitro).</text>
</comment>
<comment type="catalytic activity">
    <reaction>
        <text>Hydrolysis of terminal non-reducing beta-D-galactose residues in beta-D-galactosides.</text>
        <dbReference type="EC" id="3.2.1.23"/>
    </reaction>
</comment>
<comment type="biophysicochemical properties">
    <phDependence>
        <text evidence="3">Optimum pH is 3.5.</text>
    </phDependence>
</comment>
<comment type="subcellular location">
    <subcellularLocation>
        <location evidence="4">Secreted</location>
        <location evidence="4">Extracellular space</location>
        <location evidence="4">Apoplast</location>
    </subcellularLocation>
</comment>
<comment type="similarity">
    <text evidence="4">Belongs to the glycosyl hydrolase 35 family.</text>
</comment>
<comment type="sequence caution" evidence="4">
    <conflict type="erroneous gene model prediction">
        <sequence resource="EMBL-CDS" id="ABF95027"/>
    </conflict>
</comment>
<comment type="sequence caution" evidence="4">
    <conflict type="erroneous gene model prediction">
        <sequence resource="EMBL-CDS" id="BAF11505"/>
    </conflict>
</comment>
<organism>
    <name type="scientific">Oryza sativa subsp. japonica</name>
    <name type="common">Rice</name>
    <dbReference type="NCBI Taxonomy" id="39947"/>
    <lineage>
        <taxon>Eukaryota</taxon>
        <taxon>Viridiplantae</taxon>
        <taxon>Streptophyta</taxon>
        <taxon>Embryophyta</taxon>
        <taxon>Tracheophyta</taxon>
        <taxon>Spermatophyta</taxon>
        <taxon>Magnoliopsida</taxon>
        <taxon>Liliopsida</taxon>
        <taxon>Poales</taxon>
        <taxon>Poaceae</taxon>
        <taxon>BOP clade</taxon>
        <taxon>Oryzoideae</taxon>
        <taxon>Oryzeae</taxon>
        <taxon>Oryzinae</taxon>
        <taxon>Oryza</taxon>
        <taxon>Oryza sativa</taxon>
    </lineage>
</organism>
<feature type="signal peptide" evidence="3">
    <location>
        <begin position="1"/>
        <end position="30"/>
    </location>
</feature>
<feature type="chain" id="PRO_0000294158" description="Beta-galactosidase 6">
    <location>
        <begin position="31"/>
        <end position="858"/>
    </location>
</feature>
<feature type="domain" description="SUEL-type lectin" evidence="2">
    <location>
        <begin position="772"/>
        <end position="858"/>
    </location>
</feature>
<feature type="active site" description="Proton donor" evidence="1">
    <location>
        <position position="189"/>
    </location>
</feature>
<feature type="active site" description="Nucleophile" evidence="1">
    <location>
        <position position="258"/>
    </location>
</feature>
<feature type="glycosylation site" description="N-linked (GlcNAc...) asparagine" evidence="1">
    <location>
        <position position="32"/>
    </location>
</feature>
<feature type="glycosylation site" description="N-linked (GlcNAc...) asparagine" evidence="1">
    <location>
        <position position="259"/>
    </location>
</feature>
<feature type="glycosylation site" description="N-linked (GlcNAc...) asparagine" evidence="1">
    <location>
        <position position="482"/>
    </location>
</feature>
<feature type="glycosylation site" description="N-linked (GlcNAc...) asparagine" evidence="1">
    <location>
        <position position="507"/>
    </location>
</feature>
<feature type="glycosylation site" description="N-linked (GlcNAc...) asparagine" evidence="1">
    <location>
        <position position="595"/>
    </location>
</feature>
<feature type="glycosylation site" description="N-linked (GlcNAc...) asparagine" evidence="1">
    <location>
        <position position="830"/>
    </location>
</feature>
<feature type="sequence conflict" description="In Ref. 5; AA sequence." evidence="4" ref="5">
    <original>I</original>
    <variation>F</variation>
    <location>
        <position position="79"/>
    </location>
</feature>
<gene>
    <name type="ordered locus">Os03g0255100</name>
    <name type="ordered locus">LOC_Os03g15020</name>
</gene>
<name>BGAL6_ORYSJ</name>
<sequence>MAAATVGVLLRLLLLPVVVVVSLLVGASRAANVTYDHRAVVIDGVRRVLVSGSIHYPRSTPDMWPGLIQKSKDGGLDVIETYVFWDIHEAVRGQYDFEGRKDLVRFVKAVADAGLYVHLRIGPYVCAEWNYGGFPVWLHFVPGIKFRTDNEAFKAEMQRFTEKVVDTMKGAGLYASQGGPIILSQIENEYGNIDSAYGAAGKAYMRWAAGMAVSLDTGVPWVMCQQSDAPDPLINTCNGFYCDQFTPNSKSKPKMWTENWSGWFLSFGGAVPYRPAEDLAFAVARFYQRGGTFQNYYMYHGGTNFGRSTGGPFIATSYDYDAPIDEYGMVRQPKWGHLRDVHKAIKLCEPALIAAEPSYSSLGQNTEATVYQTADNSICAAFLANVDAQSDKTVKFNGNTYKLPAWSVSILPDCKNVVLNTAQINSQVTTSEMRSLGSSIQDTDDSLITPELATAGWSYAIEPVGITKENALTKPGLMEQINTTADASDFLWYSTSIVVKGDEPYLNGSQSNLLVNSLGHVLQIYINGKLAGSAKGSASSSLISLQTPVTLVPGKNKIDLLSTTVGLSNYGAFFDLVGAGVTGPVKLSGPNGALNLSSTDWTYQIGLRGEDLHLYNPSEASPEWVSDNAYPTNQPLIWYKTKFTAPAGDDPVAIDFTGMGKGEAWVNGQSIGRYWPTNLAPQSGCVNSCNYRGAYSSNKCLKKCGQPSQTLYHVPRSFLQPGSNDLVLFEQFGGDPSMISFTTRQTSSICAHVSEMHPAQIDSWISPQQTSQTQGPALRLECPREGQVISNIKFASFGTPSGTCGNYNHGECSSSQALAVVQEACVGMTNCSVPVSSNNFGDPCSGVTKSLVVEAACS</sequence>
<protein>
    <recommendedName>
        <fullName>Beta-galactosidase 6</fullName>
        <shortName>Lactase 6</shortName>
        <ecNumber>3.2.1.23</ecNumber>
    </recommendedName>
</protein>